<evidence type="ECO:0000255" key="1">
    <source>
        <dbReference type="HAMAP-Rule" id="MF_00736"/>
    </source>
</evidence>
<evidence type="ECO:0000305" key="2"/>
<reference key="1">
    <citation type="submission" date="2008-02" db="EMBL/GenBank/DDBJ databases">
        <title>Complete sequence of Haemophilus somnus 2336.</title>
        <authorList>
            <consortium name="US DOE Joint Genome Institute"/>
            <person name="Siddaramappa S."/>
            <person name="Duncan A.J."/>
            <person name="Challacombe J.F."/>
            <person name="Rainey D."/>
            <person name="Gillaspy A.F."/>
            <person name="Carson M."/>
            <person name="Gipson J."/>
            <person name="Gipson M."/>
            <person name="Bruce D."/>
            <person name="Detter J.C."/>
            <person name="Han C.S."/>
            <person name="Land M."/>
            <person name="Tapia R."/>
            <person name="Thompson L.S."/>
            <person name="Orvis J."/>
            <person name="Zaitshik J."/>
            <person name="Barnes G."/>
            <person name="Brettin T.S."/>
            <person name="Dyer D.W."/>
            <person name="Inzana T.J."/>
        </authorList>
    </citation>
    <scope>NUCLEOTIDE SEQUENCE [LARGE SCALE GENOMIC DNA]</scope>
    <source>
        <strain>2336</strain>
    </source>
</reference>
<dbReference type="EMBL" id="CP000947">
    <property type="protein sequence ID" value="ACA31996.1"/>
    <property type="molecule type" value="Genomic_DNA"/>
</dbReference>
<dbReference type="RefSeq" id="WP_011608322.1">
    <property type="nucleotide sequence ID" value="NC_010519.1"/>
</dbReference>
<dbReference type="SMR" id="B0UUZ4"/>
<dbReference type="STRING" id="228400.HSM_0036"/>
<dbReference type="GeneID" id="31486311"/>
<dbReference type="KEGG" id="hsm:HSM_0036"/>
<dbReference type="HOGENOM" id="CLU_074237_2_0_6"/>
<dbReference type="GO" id="GO:0022625">
    <property type="term" value="C:cytosolic large ribosomal subunit"/>
    <property type="evidence" value="ECO:0007669"/>
    <property type="project" value="TreeGrafter"/>
</dbReference>
<dbReference type="GO" id="GO:0070180">
    <property type="term" value="F:large ribosomal subunit rRNA binding"/>
    <property type="evidence" value="ECO:0007669"/>
    <property type="project" value="UniProtKB-UniRule"/>
</dbReference>
<dbReference type="GO" id="GO:0003735">
    <property type="term" value="F:structural constituent of ribosome"/>
    <property type="evidence" value="ECO:0007669"/>
    <property type="project" value="InterPro"/>
</dbReference>
<dbReference type="GO" id="GO:0006412">
    <property type="term" value="P:translation"/>
    <property type="evidence" value="ECO:0007669"/>
    <property type="project" value="UniProtKB-UniRule"/>
</dbReference>
<dbReference type="CDD" id="cd00349">
    <property type="entry name" value="Ribosomal_L11"/>
    <property type="match status" value="1"/>
</dbReference>
<dbReference type="FunFam" id="1.10.10.250:FF:000001">
    <property type="entry name" value="50S ribosomal protein L11"/>
    <property type="match status" value="1"/>
</dbReference>
<dbReference type="FunFam" id="3.30.1550.10:FF:000001">
    <property type="entry name" value="50S ribosomal protein L11"/>
    <property type="match status" value="1"/>
</dbReference>
<dbReference type="Gene3D" id="1.10.10.250">
    <property type="entry name" value="Ribosomal protein L11, C-terminal domain"/>
    <property type="match status" value="1"/>
</dbReference>
<dbReference type="Gene3D" id="3.30.1550.10">
    <property type="entry name" value="Ribosomal protein L11/L12, N-terminal domain"/>
    <property type="match status" value="1"/>
</dbReference>
<dbReference type="HAMAP" id="MF_00736">
    <property type="entry name" value="Ribosomal_uL11"/>
    <property type="match status" value="1"/>
</dbReference>
<dbReference type="InterPro" id="IPR000911">
    <property type="entry name" value="Ribosomal_uL11"/>
</dbReference>
<dbReference type="InterPro" id="IPR006519">
    <property type="entry name" value="Ribosomal_uL11_bac-typ"/>
</dbReference>
<dbReference type="InterPro" id="IPR020783">
    <property type="entry name" value="Ribosomal_uL11_C"/>
</dbReference>
<dbReference type="InterPro" id="IPR036769">
    <property type="entry name" value="Ribosomal_uL11_C_sf"/>
</dbReference>
<dbReference type="InterPro" id="IPR020785">
    <property type="entry name" value="Ribosomal_uL11_CS"/>
</dbReference>
<dbReference type="InterPro" id="IPR020784">
    <property type="entry name" value="Ribosomal_uL11_N"/>
</dbReference>
<dbReference type="InterPro" id="IPR036796">
    <property type="entry name" value="Ribosomal_uL11_N_sf"/>
</dbReference>
<dbReference type="NCBIfam" id="TIGR01632">
    <property type="entry name" value="L11_bact"/>
    <property type="match status" value="1"/>
</dbReference>
<dbReference type="PANTHER" id="PTHR11661">
    <property type="entry name" value="60S RIBOSOMAL PROTEIN L12"/>
    <property type="match status" value="1"/>
</dbReference>
<dbReference type="PANTHER" id="PTHR11661:SF1">
    <property type="entry name" value="LARGE RIBOSOMAL SUBUNIT PROTEIN UL11M"/>
    <property type="match status" value="1"/>
</dbReference>
<dbReference type="Pfam" id="PF00298">
    <property type="entry name" value="Ribosomal_L11"/>
    <property type="match status" value="1"/>
</dbReference>
<dbReference type="Pfam" id="PF03946">
    <property type="entry name" value="Ribosomal_L11_N"/>
    <property type="match status" value="1"/>
</dbReference>
<dbReference type="SMART" id="SM00649">
    <property type="entry name" value="RL11"/>
    <property type="match status" value="1"/>
</dbReference>
<dbReference type="SUPFAM" id="SSF54747">
    <property type="entry name" value="Ribosomal L11/L12e N-terminal domain"/>
    <property type="match status" value="1"/>
</dbReference>
<dbReference type="SUPFAM" id="SSF46906">
    <property type="entry name" value="Ribosomal protein L11, C-terminal domain"/>
    <property type="match status" value="1"/>
</dbReference>
<dbReference type="PROSITE" id="PS00359">
    <property type="entry name" value="RIBOSOMAL_L11"/>
    <property type="match status" value="1"/>
</dbReference>
<name>RL11_HISS2</name>
<keyword id="KW-0488">Methylation</keyword>
<keyword id="KW-0687">Ribonucleoprotein</keyword>
<keyword id="KW-0689">Ribosomal protein</keyword>
<keyword id="KW-0694">RNA-binding</keyword>
<keyword id="KW-0699">rRNA-binding</keyword>
<gene>
    <name evidence="1" type="primary">rplK</name>
    <name type="ordered locus">HSM_0036</name>
</gene>
<comment type="function">
    <text evidence="1">Forms part of the ribosomal stalk which helps the ribosome interact with GTP-bound translation factors.</text>
</comment>
<comment type="subunit">
    <text evidence="1">Part of the ribosomal stalk of the 50S ribosomal subunit. Interacts with L10 and the large rRNA to form the base of the stalk. L10 forms an elongated spine to which L12 dimers bind in a sequential fashion forming a multimeric L10(L12)X complex.</text>
</comment>
<comment type="PTM">
    <text evidence="1">One or more lysine residues are methylated.</text>
</comment>
<comment type="similarity">
    <text evidence="1">Belongs to the universal ribosomal protein uL11 family.</text>
</comment>
<proteinExistence type="inferred from homology"/>
<feature type="chain" id="PRO_1000083386" description="Large ribosomal subunit protein uL11">
    <location>
        <begin position="1"/>
        <end position="142"/>
    </location>
</feature>
<organism>
    <name type="scientific">Histophilus somni (strain 2336)</name>
    <name type="common">Haemophilus somnus</name>
    <dbReference type="NCBI Taxonomy" id="228400"/>
    <lineage>
        <taxon>Bacteria</taxon>
        <taxon>Pseudomonadati</taxon>
        <taxon>Pseudomonadota</taxon>
        <taxon>Gammaproteobacteria</taxon>
        <taxon>Pasteurellales</taxon>
        <taxon>Pasteurellaceae</taxon>
        <taxon>Histophilus</taxon>
    </lineage>
</organism>
<protein>
    <recommendedName>
        <fullName evidence="1">Large ribosomal subunit protein uL11</fullName>
    </recommendedName>
    <alternativeName>
        <fullName evidence="2">50S ribosomal protein L11</fullName>
    </alternativeName>
</protein>
<sequence length="142" mass="14934">MAKKVQAYVKLQVAAGMANPSPPVGPALGQQGVNIMEFCKAFNARTESLEKGLPIPVVITVYADRSFTFVTKTPPAAVLLKKAAGIKSGSSKPNKDKVGKVTLDQIRQIAETKAADMTGATIETKMKSIEGTARSMGLVVEG</sequence>
<accession>B0UUZ4</accession>